<reference key="1">
    <citation type="journal article" date="1998" name="Biochem. J.">
        <title>Trypanosoma cruzi has not lost its S-adenosylmethionine decarboxylase: characterization of the gene and the encoded enzyme.</title>
        <authorList>
            <person name="Persson K."/>
            <person name="Aaslund L."/>
            <person name="Grahn B."/>
            <person name="Hanke J."/>
            <person name="Heby O."/>
        </authorList>
    </citation>
    <scope>NUCLEOTIDE SEQUENCE [GENOMIC DNA]</scope>
    <scope>FUNCTION</scope>
    <scope>CATALYTIC ACTIVITY</scope>
    <scope>ACTIVITY REGULATION</scope>
    <scope>BIOPHYSICOCHEMICAL PROPERTIES</scope>
    <scope>PATHWAY</scope>
    <scope>PROTEOLYTIC CLEAVAGE</scope>
    <source>
        <strain>CL Brener</strain>
    </source>
</reference>
<reference key="2">
    <citation type="journal article" date="1999" name="Mol. Biochem. Parasitol.">
        <title>Cloning and kinetic characterization of the Trypanosoma cruzi S-adenosylmethionine decarboxylase.</title>
        <authorList>
            <person name="Kinch L.N."/>
            <person name="Scott J.R."/>
            <person name="Ullman B."/>
            <person name="Phillips M.A."/>
        </authorList>
    </citation>
    <scope>NUCLEOTIDE SEQUENCE [MRNA]</scope>
    <scope>FUNCTION</scope>
    <scope>CATALYTIC ACTIVITY</scope>
    <scope>ACTIVITY REGULATION</scope>
    <scope>BIOPHYSICOCHEMICAL PROPERTIES</scope>
    <scope>PATHWAY</scope>
    <scope>PROTEOLYTIC CLEAVAGE</scope>
</reference>
<proteinExistence type="evidence at protein level"/>
<sequence length="370" mass="42154">MLSNKDPLSLMAMWGSVKGYDPNQGASFEGPEKRLEVIMRIIDETHSEGLHALGDEVWKGVVGSLNAQIVSKESNEYIRSYVLTESSLFVMRDRIILITCGTTTLLNAVPFVLDAVSDVRGEVEWVSFMHKNYSFPWEQKGPHLSMAEEFNTLRTYFPSGKPFIFGPVDSDHYFLFVYDDVIRPCETENDTQLSMTMYGLDRTQTKHWFSDRFISTGTETAAIRKATKLDKVADDSWKLHDLQFEPCGYSINTIRGAEYQTIHITPEDHCSFASYETNTPAVNYSERINTVLGVFAPIRFSVIVFIDPDSDVGRLYQKGQNVGVEAEYYPKYELQNRTVNEFAPGYVVMKMNYARRAEVTEKDSTDSVEE</sequence>
<name>DCAMC_TRYCR</name>
<organism>
    <name type="scientific">Trypanosoma cruzi</name>
    <dbReference type="NCBI Taxonomy" id="5693"/>
    <lineage>
        <taxon>Eukaryota</taxon>
        <taxon>Discoba</taxon>
        <taxon>Euglenozoa</taxon>
        <taxon>Kinetoplastea</taxon>
        <taxon>Metakinetoplastina</taxon>
        <taxon>Trypanosomatida</taxon>
        <taxon>Trypanosomatidae</taxon>
        <taxon>Trypanosoma</taxon>
        <taxon>Schizotrypanum</taxon>
    </lineage>
</organism>
<accession>O76240</accession>
<accession>Q9UAD2</accession>
<dbReference type="EC" id="4.1.1.50" evidence="4 5"/>
<dbReference type="EMBL" id="AF032907">
    <property type="protein sequence ID" value="AAC33263.1"/>
    <property type="molecule type" value="Genomic_DNA"/>
</dbReference>
<dbReference type="EMBL" id="AF075243">
    <property type="protein sequence ID" value="AAC26796.1"/>
    <property type="molecule type" value="mRNA"/>
</dbReference>
<dbReference type="RefSeq" id="XP_806552.1">
    <property type="nucleotide sequence ID" value="XM_801459.1"/>
</dbReference>
<dbReference type="SMR" id="O76240"/>
<dbReference type="GeneID" id="3536582"/>
<dbReference type="KEGG" id="tcr:504257.30"/>
<dbReference type="VEuPathDB" id="TriTrypDB:BCY84_01143"/>
<dbReference type="VEuPathDB" id="TriTrypDB:C3747_28g21"/>
<dbReference type="VEuPathDB" id="TriTrypDB:C4B63_18g214"/>
<dbReference type="VEuPathDB" id="TriTrypDB:ECC02_000011"/>
<dbReference type="VEuPathDB" id="TriTrypDB:Tc_MARK_2060"/>
<dbReference type="VEuPathDB" id="TriTrypDB:TcBrA4_0027780"/>
<dbReference type="VEuPathDB" id="TriTrypDB:TcCL_NonESM02979"/>
<dbReference type="VEuPathDB" id="TriTrypDB:TcCLB.504257.30"/>
<dbReference type="VEuPathDB" id="TriTrypDB:TcCLB.509167.120"/>
<dbReference type="VEuPathDB" id="TriTrypDB:TCDM_02116"/>
<dbReference type="VEuPathDB" id="TriTrypDB:TcG_00999"/>
<dbReference type="VEuPathDB" id="TriTrypDB:TCSYLVIO_003342"/>
<dbReference type="VEuPathDB" id="TriTrypDB:TcYC6_0098450"/>
<dbReference type="OMA" id="WFEESSN"/>
<dbReference type="OrthoDB" id="1068353at2759"/>
<dbReference type="BRENDA" id="4.1.1.50">
    <property type="organism ID" value="6524"/>
</dbReference>
<dbReference type="SABIO-RK" id="O76240"/>
<dbReference type="UniPathway" id="UPA00331">
    <property type="reaction ID" value="UER00451"/>
</dbReference>
<dbReference type="GO" id="GO:0005829">
    <property type="term" value="C:cytosol"/>
    <property type="evidence" value="ECO:0007669"/>
    <property type="project" value="TreeGrafter"/>
</dbReference>
<dbReference type="GO" id="GO:0004014">
    <property type="term" value="F:adenosylmethionine decarboxylase activity"/>
    <property type="evidence" value="ECO:0007669"/>
    <property type="project" value="UniProtKB-EC"/>
</dbReference>
<dbReference type="GO" id="GO:0008295">
    <property type="term" value="P:spermidine biosynthetic process"/>
    <property type="evidence" value="ECO:0007669"/>
    <property type="project" value="UniProtKB-KW"/>
</dbReference>
<dbReference type="GO" id="GO:0006597">
    <property type="term" value="P:spermine biosynthetic process"/>
    <property type="evidence" value="ECO:0007669"/>
    <property type="project" value="InterPro"/>
</dbReference>
<dbReference type="FunFam" id="3.60.90.10:FF:000009">
    <property type="entry name" value="S-adenosylmethionine decarboxylase proenzyme"/>
    <property type="match status" value="1"/>
</dbReference>
<dbReference type="Gene3D" id="3.30.360.50">
    <property type="entry name" value="S-adenosylmethionine decarboxylase"/>
    <property type="match status" value="1"/>
</dbReference>
<dbReference type="Gene3D" id="3.60.90.10">
    <property type="entry name" value="S-adenosylmethionine decarboxylase"/>
    <property type="match status" value="1"/>
</dbReference>
<dbReference type="InterPro" id="IPR048283">
    <property type="entry name" value="AdoMetDC-like"/>
</dbReference>
<dbReference type="InterPro" id="IPR001985">
    <property type="entry name" value="S-AdoMet_decarboxylase_euk"/>
</dbReference>
<dbReference type="InterPro" id="IPR016067">
    <property type="entry name" value="S-AdoMet_deCO2ase_core"/>
</dbReference>
<dbReference type="InterPro" id="IPR018166">
    <property type="entry name" value="S-AdoMet_deCO2ase_CS"/>
</dbReference>
<dbReference type="PANTHER" id="PTHR11570">
    <property type="entry name" value="S-ADENOSYLMETHIONINE DECARBOXYLASE"/>
    <property type="match status" value="1"/>
</dbReference>
<dbReference type="PANTHER" id="PTHR11570:SF0">
    <property type="entry name" value="S-ADENOSYLMETHIONINE DECARBOXYLASE PROENZYME"/>
    <property type="match status" value="1"/>
</dbReference>
<dbReference type="Pfam" id="PF01536">
    <property type="entry name" value="SAM_decarbox"/>
    <property type="match status" value="1"/>
</dbReference>
<dbReference type="PIRSF" id="PIRSF001355">
    <property type="entry name" value="S-AdenosylMet_decarboxylase"/>
    <property type="match status" value="1"/>
</dbReference>
<dbReference type="SUPFAM" id="SSF56276">
    <property type="entry name" value="S-adenosylmethionine decarboxylase"/>
    <property type="match status" value="1"/>
</dbReference>
<dbReference type="PROSITE" id="PS01336">
    <property type="entry name" value="ADOMETDC"/>
    <property type="match status" value="1"/>
</dbReference>
<evidence type="ECO:0000250" key="1"/>
<evidence type="ECO:0000250" key="2">
    <source>
        <dbReference type="UniProtKB" id="P17707"/>
    </source>
</evidence>
<evidence type="ECO:0000250" key="3">
    <source>
        <dbReference type="UniProtKB" id="P50244"/>
    </source>
</evidence>
<evidence type="ECO:0000269" key="4">
    <source>
    </source>
</evidence>
<evidence type="ECO:0000269" key="5">
    <source>
    </source>
</evidence>
<evidence type="ECO:0000305" key="6"/>
<feature type="chain" id="PRO_0000029985" description="S-adenosylmethionine decarboxylase beta chain" evidence="1">
    <location>
        <begin position="1"/>
        <end position="85"/>
    </location>
</feature>
<feature type="chain" id="PRO_0000029986" description="S-adenosylmethionine decarboxylase alpha chain" evidence="1">
    <location>
        <begin position="86"/>
        <end position="370"/>
    </location>
</feature>
<feature type="active site" evidence="2">
    <location>
        <position position="29"/>
    </location>
</feature>
<feature type="active site" evidence="2">
    <location>
        <position position="32"/>
    </location>
</feature>
<feature type="active site" description="Schiff-base intermediate with substrate; via pyruvic acid" evidence="2">
    <location>
        <position position="86"/>
    </location>
</feature>
<feature type="active site" description="Proton donor; for catalytic activity" evidence="2">
    <location>
        <position position="100"/>
    </location>
</feature>
<feature type="active site" description="Proton acceptor; for processing activity" evidence="2">
    <location>
        <position position="250"/>
    </location>
</feature>
<feature type="active site" description="Proton acceptor; for processing activity" evidence="2">
    <location>
        <position position="263"/>
    </location>
</feature>
<feature type="binding site" evidence="2">
    <location>
        <position position="28"/>
    </location>
    <ligand>
        <name>substrate</name>
    </ligand>
</feature>
<feature type="binding site" evidence="2">
    <location>
        <position position="85"/>
    </location>
    <ligand>
        <name>substrate</name>
    </ligand>
</feature>
<feature type="binding site" evidence="2">
    <location>
        <position position="267"/>
    </location>
    <ligand>
        <name>substrate</name>
    </ligand>
</feature>
<feature type="site" description="Cleavage (non-hydrolytic); by autolysis" evidence="2">
    <location>
        <begin position="85"/>
        <end position="86"/>
    </location>
</feature>
<feature type="modified residue" description="Pyruvic acid (Ser); by autocatalysis" evidence="2">
    <location>
        <position position="86"/>
    </location>
</feature>
<feature type="sequence conflict" description="In Ref. 2; AAC26796." evidence="6" ref="2">
    <original>I</original>
    <variation>T</variation>
    <location>
        <position position="42"/>
    </location>
</feature>
<feature type="sequence conflict" description="In Ref. 2; AAC26796." evidence="6" ref="2">
    <original>E</original>
    <variation>G</variation>
    <location>
        <position position="56"/>
    </location>
</feature>
<feature type="sequence conflict" description="In Ref. 2; AAC26796." evidence="6" ref="2">
    <original>D</original>
    <variation>N</variation>
    <location>
        <position position="230"/>
    </location>
</feature>
<feature type="sequence conflict" description="In Ref. 2; AAC26796." evidence="6" ref="2">
    <original>T</original>
    <variation>A</variation>
    <location>
        <position position="360"/>
    </location>
</feature>
<keyword id="KW-0068">Autocatalytic cleavage</keyword>
<keyword id="KW-0210">Decarboxylase</keyword>
<keyword id="KW-0456">Lyase</keyword>
<keyword id="KW-0620">Polyamine biosynthesis</keyword>
<keyword id="KW-0670">Pyruvate</keyword>
<keyword id="KW-0949">S-adenosyl-L-methionine</keyword>
<keyword id="KW-0704">Schiff base</keyword>
<keyword id="KW-0745">Spermidine biosynthesis</keyword>
<keyword id="KW-0865">Zymogen</keyword>
<comment type="function">
    <text evidence="3 4 5">Probably in association with catalytically inactive AdoMetDC prozyme, catalyzes the decarboxylation of S-adenosyl-L-methionine which is essential for the biosynthesis of the polyamine spermidine (PubMed:10413038, PubMed:9677309). Required for growth and survival during the bloodstream life cycle stage (By similarity).</text>
</comment>
<comment type="catalytic activity">
    <reaction evidence="4 5">
        <text>S-adenosyl-L-methionine + H(+) = S-adenosyl 3-(methylsulfanyl)propylamine + CO2</text>
        <dbReference type="Rhea" id="RHEA:15981"/>
        <dbReference type="ChEBI" id="CHEBI:15378"/>
        <dbReference type="ChEBI" id="CHEBI:16526"/>
        <dbReference type="ChEBI" id="CHEBI:57443"/>
        <dbReference type="ChEBI" id="CHEBI:59789"/>
        <dbReference type="EC" id="4.1.1.50"/>
    </reaction>
</comment>
<comment type="cofactor">
    <cofactor>
        <name>pyruvate</name>
        <dbReference type="ChEBI" id="CHEBI:15361"/>
    </cofactor>
    <text>Binds 1 pyruvoyl group covalently per subunit.</text>
</comment>
<comment type="activity regulation">
    <text evidence="3 4 5">Allosterically activated by AdoMetDC prozyme (By similarity). Activated by putrescine (PubMed:10413038, PubMed:9677309). Inhibited by spermine and methylglyoxal-bis(guanylhydrazone) (MGBG) and slightly by spermidine (PubMed:9677309). Inhibited by 5'-([(Z)-4-amino-2-butenyl]methylamino)-5'-deoxyadenosine (MDL 73811) (PubMed:10413038).</text>
</comment>
<comment type="biophysicochemical properties">
    <kinetics>
        <KM evidence="5">0.21 mM for S-adenosyl-L-methionine (at pH 7.5)</KM>
        <KM evidence="4">0.051 mM for S-adenosyl-L-methionine (in presence of putrescine)</KM>
    </kinetics>
</comment>
<comment type="pathway">
    <text evidence="4 5">Amine and polyamine biosynthesis; S-adenosylmethioninamine biosynthesis; S-adenosylmethioninamine from S-adenosyl-L-methionine: step 1/1.</text>
</comment>
<comment type="subunit">
    <text evidence="3">Forms a heterodimer with catalytically inactive AdoMetDC prozyme; heterodimerization is required to activate AdoMetDC.</text>
</comment>
<comment type="PTM">
    <text evidence="2 4 5">Is synthesized initially as an inactive proenzyme (PubMed:10413038, PubMed:9677309). Formation of the active enzyme involves a self-maturation process in which the active site pyruvoyl group is generated from an internal serine residue via an autocatalytic post-translational modification (By similarity). Two non-identical subunits are generated from the proenzyme in this reaction, and the pyruvate is formed at the N-terminus of the alpha chain, which is derived from the carboxyl end of the proenzyme (By similarity). The post-translation cleavage follows an unusual pathway, termed non-hydrolytic serinolysis, in which the side chain hydroxyl group of the serine supplies its oxygen atom to form the C-terminus of the beta chain, while the remainder of the serine residue undergoes an oxidative deamination to the alpha chain (By similarity).</text>
</comment>
<comment type="similarity">
    <text evidence="6">Belongs to the eukaryotic AdoMetDC family.</text>
</comment>
<protein>
    <recommendedName>
        <fullName>S-adenosylmethionine decarboxylase proenzyme</fullName>
        <shortName>AdoMetDC</shortName>
        <shortName>SAMDC</shortName>
        <ecNumber evidence="4 5">4.1.1.50</ecNumber>
    </recommendedName>
    <component>
        <recommendedName>
            <fullName>S-adenosylmethionine decarboxylase alpha chain</fullName>
        </recommendedName>
    </component>
    <component>
        <recommendedName>
            <fullName>S-adenosylmethionine decarboxylase beta chain</fullName>
        </recommendedName>
    </component>
</protein>